<name>FAHD1_ORYSJ</name>
<evidence type="ECO:0000250" key="1">
    <source>
        <dbReference type="UniProtKB" id="Q6P587"/>
    </source>
</evidence>
<evidence type="ECO:0000250" key="2">
    <source>
        <dbReference type="UniProtKB" id="Q93ZE5"/>
    </source>
</evidence>
<evidence type="ECO:0000255" key="3"/>
<evidence type="ECO:0000305" key="4"/>
<evidence type="ECO:0000312" key="5">
    <source>
        <dbReference type="EMBL" id="AAT85014.1"/>
    </source>
</evidence>
<evidence type="ECO:0000312" key="6">
    <source>
        <dbReference type="EMBL" id="ABF96673.1"/>
    </source>
</evidence>
<evidence type="ECO:0000312" key="7">
    <source>
        <dbReference type="EMBL" id="BAS84747.1"/>
    </source>
</evidence>
<evidence type="ECO:0000312" key="8">
    <source>
        <dbReference type="EMBL" id="EAZ27366.1"/>
    </source>
</evidence>
<protein>
    <recommendedName>
        <fullName evidence="4">Oxaloacetate tautomerase FAHD1, mitochondrial</fullName>
        <ecNumber evidence="2">5.3.2.2</ecNumber>
    </recommendedName>
    <alternativeName>
        <fullName evidence="4">Fumarylacetoacetate hydrolase domain-containing protein 1</fullName>
        <shortName evidence="4">FAH domain-containing protein 1</shortName>
    </alternativeName>
</protein>
<sequence>MAAAAAAAAQRLLAASTKIIGVGRNYVAHAKELGNPVPKEPLLFLKPTSSFLHAGVAGAAIEVPGPVESLHHEVELAVVLSQRARDVPEASAMDFVGGYALALDMTAREFQSAAKSAGLPWTLCKAQDTFTPISAVIPKSAVANPNDLELWLKVDDELRQKGSTSDMIFKIPSLISYISSIMTLMEGDVILTGTPEGVGPVRPGQKIKAGITGLVDVEFDVQKRKRSFST</sequence>
<gene>
    <name evidence="4" type="primary">FAHD1</name>
    <name evidence="7" type="ordered locus">Os03g0421500</name>
    <name evidence="6" type="ordered locus">LOC_Os03g30800</name>
    <name evidence="8" type="ORF">OsJ_11310</name>
    <name evidence="5" type="ORF">OSJNBb0021K20.19</name>
</gene>
<dbReference type="EC" id="5.3.2.2" evidence="2"/>
<dbReference type="EMBL" id="AC135598">
    <property type="protein sequence ID" value="AAT85014.1"/>
    <property type="status" value="ALT_SEQ"/>
    <property type="molecule type" value="Genomic_DNA"/>
</dbReference>
<dbReference type="EMBL" id="DP000009">
    <property type="protein sequence ID" value="ABF96673.1"/>
    <property type="status" value="ALT_SEQ"/>
    <property type="molecule type" value="Genomic_DNA"/>
</dbReference>
<dbReference type="EMBL" id="AP008209">
    <property type="protein sequence ID" value="BAF12298.2"/>
    <property type="status" value="ALT_SEQ"/>
    <property type="molecule type" value="Genomic_DNA"/>
</dbReference>
<dbReference type="EMBL" id="AP008209">
    <property type="protein sequence ID" value="BAH92205.1"/>
    <property type="status" value="ALT_SEQ"/>
    <property type="molecule type" value="Genomic_DNA"/>
</dbReference>
<dbReference type="EMBL" id="AP014959">
    <property type="protein sequence ID" value="BAS84747.1"/>
    <property type="status" value="ALT_SEQ"/>
    <property type="molecule type" value="Genomic_DNA"/>
</dbReference>
<dbReference type="EMBL" id="CM000140">
    <property type="protein sequence ID" value="EAZ27366.1"/>
    <property type="molecule type" value="Genomic_DNA"/>
</dbReference>
<dbReference type="SMR" id="A3AJ77"/>
<dbReference type="FunCoup" id="A3AJ77">
    <property type="interactions" value="1782"/>
</dbReference>
<dbReference type="STRING" id="39947.A3AJ77"/>
<dbReference type="PaxDb" id="39947-A3AJ77"/>
<dbReference type="KEGG" id="dosa:Os03g0421500"/>
<dbReference type="KEGG" id="dosa:Os03g0421700"/>
<dbReference type="InParanoid" id="A3AJ77"/>
<dbReference type="PlantReactome" id="R-OSA-1119506">
    <property type="pathway name" value="tyrosine degradation I"/>
</dbReference>
<dbReference type="Proteomes" id="UP000000763">
    <property type="component" value="Chromosome 3"/>
</dbReference>
<dbReference type="Proteomes" id="UP000007752">
    <property type="component" value="Chromosome 3"/>
</dbReference>
<dbReference type="Proteomes" id="UP000059680">
    <property type="component" value="Chromosome 3"/>
</dbReference>
<dbReference type="GO" id="GO:0005739">
    <property type="term" value="C:mitochondrion"/>
    <property type="evidence" value="ECO:0000318"/>
    <property type="project" value="GO_Central"/>
</dbReference>
<dbReference type="GO" id="GO:0018773">
    <property type="term" value="F:acetylpyruvate hydrolase activity"/>
    <property type="evidence" value="ECO:0000318"/>
    <property type="project" value="GO_Central"/>
</dbReference>
<dbReference type="GO" id="GO:0047621">
    <property type="term" value="F:acylpyruvate hydrolase activity"/>
    <property type="evidence" value="ECO:0007669"/>
    <property type="project" value="UniProtKB-EC"/>
</dbReference>
<dbReference type="GO" id="GO:0046872">
    <property type="term" value="F:metal ion binding"/>
    <property type="evidence" value="ECO:0007669"/>
    <property type="project" value="UniProtKB-KW"/>
</dbReference>
<dbReference type="GO" id="GO:0050163">
    <property type="term" value="F:oxaloacetate tautomerase activity"/>
    <property type="evidence" value="ECO:0007669"/>
    <property type="project" value="RHEA"/>
</dbReference>
<dbReference type="FunFam" id="3.90.850.10:FF:000003">
    <property type="entry name" value="Fumarylacetoacetate hydrolase domain-containing 1"/>
    <property type="match status" value="1"/>
</dbReference>
<dbReference type="Gene3D" id="3.90.850.10">
    <property type="entry name" value="Fumarylacetoacetase-like, C-terminal domain"/>
    <property type="match status" value="1"/>
</dbReference>
<dbReference type="InterPro" id="IPR011234">
    <property type="entry name" value="Fumarylacetoacetase-like_C"/>
</dbReference>
<dbReference type="InterPro" id="IPR036663">
    <property type="entry name" value="Fumarylacetoacetase_C_sf"/>
</dbReference>
<dbReference type="PANTHER" id="PTHR11820">
    <property type="entry name" value="ACYLPYRUVASE"/>
    <property type="match status" value="1"/>
</dbReference>
<dbReference type="PANTHER" id="PTHR11820:SF7">
    <property type="entry name" value="ACYLPYRUVASE FAHD1, MITOCHONDRIAL"/>
    <property type="match status" value="1"/>
</dbReference>
<dbReference type="Pfam" id="PF01557">
    <property type="entry name" value="FAA_hydrolase"/>
    <property type="match status" value="1"/>
</dbReference>
<dbReference type="SUPFAM" id="SSF56529">
    <property type="entry name" value="FAH"/>
    <property type="match status" value="1"/>
</dbReference>
<keyword id="KW-0413">Isomerase</keyword>
<keyword id="KW-0460">Magnesium</keyword>
<keyword id="KW-0479">Metal-binding</keyword>
<keyword id="KW-0496">Mitochondrion</keyword>
<keyword id="KW-1185">Reference proteome</keyword>
<keyword id="KW-0809">Transit peptide</keyword>
<proteinExistence type="inferred from homology"/>
<accession>A3AJ77</accession>
<accession>C7IZU0</accession>
<accession>Q0DR40</accession>
<accession>Q6ATM3</accession>
<feature type="transit peptide" description="Mitochondrion" evidence="3">
    <location>
        <begin position="1"/>
        <end position="26"/>
    </location>
</feature>
<feature type="chain" id="PRO_0000442052" description="Oxaloacetate tautomerase FAHD1, mitochondrial">
    <location>
        <begin position="27"/>
        <end position="230"/>
    </location>
</feature>
<feature type="binding site" evidence="1">
    <location>
        <position position="73"/>
    </location>
    <ligand>
        <name>Mg(2+)</name>
        <dbReference type="ChEBI" id="CHEBI:18420"/>
    </ligand>
</feature>
<feature type="binding site" evidence="1">
    <location>
        <position position="75"/>
    </location>
    <ligand>
        <name>Mg(2+)</name>
        <dbReference type="ChEBI" id="CHEBI:18420"/>
    </ligand>
</feature>
<feature type="binding site" evidence="1">
    <location>
        <position position="104"/>
    </location>
    <ligand>
        <name>Mg(2+)</name>
        <dbReference type="ChEBI" id="CHEBI:18420"/>
    </ligand>
</feature>
<organism>
    <name type="scientific">Oryza sativa subsp. japonica</name>
    <name type="common">Rice</name>
    <dbReference type="NCBI Taxonomy" id="39947"/>
    <lineage>
        <taxon>Eukaryota</taxon>
        <taxon>Viridiplantae</taxon>
        <taxon>Streptophyta</taxon>
        <taxon>Embryophyta</taxon>
        <taxon>Tracheophyta</taxon>
        <taxon>Spermatophyta</taxon>
        <taxon>Magnoliopsida</taxon>
        <taxon>Liliopsida</taxon>
        <taxon>Poales</taxon>
        <taxon>Poaceae</taxon>
        <taxon>BOP clade</taxon>
        <taxon>Oryzoideae</taxon>
        <taxon>Oryzeae</taxon>
        <taxon>Oryzinae</taxon>
        <taxon>Oryza</taxon>
        <taxon>Oryza sativa</taxon>
    </lineage>
</organism>
<comment type="function">
    <text evidence="2">Tautomerase that converts enol-oxaloacetate, a strong inhibitor of succinate dehydrogenase, to the physiological keto form of oxaloacetate.</text>
</comment>
<comment type="catalytic activity">
    <reaction evidence="2">
        <text>oxaloacetate = enol-oxaloacetate</text>
        <dbReference type="Rhea" id="RHEA:16021"/>
        <dbReference type="ChEBI" id="CHEBI:16452"/>
        <dbReference type="ChEBI" id="CHEBI:17479"/>
        <dbReference type="EC" id="5.3.2.2"/>
    </reaction>
    <physiologicalReaction direction="right-to-left" evidence="2">
        <dbReference type="Rhea" id="RHEA:16023"/>
    </physiologicalReaction>
</comment>
<comment type="cofactor">
    <cofactor evidence="1">
        <name>Mg(2+)</name>
        <dbReference type="ChEBI" id="CHEBI:18420"/>
    </cofactor>
    <cofactor evidence="1">
        <name>Mn(2+)</name>
        <dbReference type="ChEBI" id="CHEBI:29035"/>
    </cofactor>
    <text evidence="1">Requires a divalent metal cation for activity.</text>
</comment>
<comment type="subcellular location">
    <subcellularLocation>
        <location evidence="2">Mitochondrion</location>
    </subcellularLocation>
</comment>
<comment type="similarity">
    <text evidence="4">Belongs to the FAH family.</text>
</comment>
<comment type="sequence caution" evidence="4">
    <conflict type="erroneous gene model prediction">
        <sequence resource="EMBL-CDS" id="AAT85014"/>
    </conflict>
</comment>
<comment type="sequence caution" evidence="4">
    <conflict type="erroneous gene model prediction">
        <sequence resource="EMBL-CDS" id="ABF96673"/>
    </conflict>
</comment>
<comment type="sequence caution" evidence="4">
    <conflict type="erroneous gene model prediction">
        <sequence resource="EMBL-CDS" id="BAF12298"/>
    </conflict>
</comment>
<comment type="sequence caution" evidence="4">
    <conflict type="erroneous gene model prediction">
        <sequence resource="EMBL-CDS" id="BAH92205"/>
    </conflict>
</comment>
<comment type="sequence caution" evidence="4">
    <conflict type="erroneous gene model prediction">
        <sequence resource="EMBL-CDS" id="BAS84747"/>
    </conflict>
</comment>
<reference key="1">
    <citation type="journal article" date="2005" name="Genome Res.">
        <title>Sequence, annotation, and analysis of synteny between rice chromosome 3 and diverged grass species.</title>
        <authorList>
            <consortium name="The rice chromosome 3 sequencing consortium"/>
            <person name="Buell C.R."/>
            <person name="Yuan Q."/>
            <person name="Ouyang S."/>
            <person name="Liu J."/>
            <person name="Zhu W."/>
            <person name="Wang A."/>
            <person name="Maiti R."/>
            <person name="Haas B."/>
            <person name="Wortman J."/>
            <person name="Pertea M."/>
            <person name="Jones K.M."/>
            <person name="Kim M."/>
            <person name="Overton L."/>
            <person name="Tsitrin T."/>
            <person name="Fadrosh D."/>
            <person name="Bera J."/>
            <person name="Weaver B."/>
            <person name="Jin S."/>
            <person name="Johri S."/>
            <person name="Reardon M."/>
            <person name="Webb K."/>
            <person name="Hill J."/>
            <person name="Moffat K."/>
            <person name="Tallon L."/>
            <person name="Van Aken S."/>
            <person name="Lewis M."/>
            <person name="Utterback T."/>
            <person name="Feldblyum T."/>
            <person name="Zismann V."/>
            <person name="Iobst S."/>
            <person name="Hsiao J."/>
            <person name="de Vazeille A.R."/>
            <person name="Salzberg S.L."/>
            <person name="White O."/>
            <person name="Fraser C.M."/>
            <person name="Yu Y."/>
            <person name="Kim H."/>
            <person name="Rambo T."/>
            <person name="Currie J."/>
            <person name="Collura K."/>
            <person name="Kernodle-Thompson S."/>
            <person name="Wei F."/>
            <person name="Kudrna K."/>
            <person name="Ammiraju J.S.S."/>
            <person name="Luo M."/>
            <person name="Goicoechea J.L."/>
            <person name="Wing R.A."/>
            <person name="Henry D."/>
            <person name="Oates R."/>
            <person name="Palmer M."/>
            <person name="Pries G."/>
            <person name="Saski C."/>
            <person name="Simmons J."/>
            <person name="Soderlund C."/>
            <person name="Nelson W."/>
            <person name="de la Bastide M."/>
            <person name="Spiegel L."/>
            <person name="Nascimento L."/>
            <person name="Huang E."/>
            <person name="Preston R."/>
            <person name="Zutavern T."/>
            <person name="Palmer L."/>
            <person name="O'Shaughnessy A."/>
            <person name="Dike S."/>
            <person name="McCombie W.R."/>
            <person name="Minx P."/>
            <person name="Cordum H."/>
            <person name="Wilson R."/>
            <person name="Jin W."/>
            <person name="Lee H.R."/>
            <person name="Jiang J."/>
            <person name="Jackson S."/>
        </authorList>
    </citation>
    <scope>NUCLEOTIDE SEQUENCE [LARGE SCALE GENOMIC DNA]</scope>
    <source>
        <strain>cv. Nipponbare</strain>
    </source>
</reference>
<reference key="2">
    <citation type="journal article" date="2005" name="Nature">
        <title>The map-based sequence of the rice genome.</title>
        <authorList>
            <consortium name="International rice genome sequencing project (IRGSP)"/>
        </authorList>
    </citation>
    <scope>NUCLEOTIDE SEQUENCE [LARGE SCALE GENOMIC DNA]</scope>
    <source>
        <strain>cv. Nipponbare</strain>
    </source>
</reference>
<reference key="3">
    <citation type="journal article" date="2008" name="Nucleic Acids Res.">
        <title>The rice annotation project database (RAP-DB): 2008 update.</title>
        <authorList>
            <consortium name="The rice annotation project (RAP)"/>
        </authorList>
    </citation>
    <scope>GENOME REANNOTATION</scope>
    <source>
        <strain>cv. Nipponbare</strain>
    </source>
</reference>
<reference key="4">
    <citation type="journal article" date="2013" name="Rice">
        <title>Improvement of the Oryza sativa Nipponbare reference genome using next generation sequence and optical map data.</title>
        <authorList>
            <person name="Kawahara Y."/>
            <person name="de la Bastide M."/>
            <person name="Hamilton J.P."/>
            <person name="Kanamori H."/>
            <person name="McCombie W.R."/>
            <person name="Ouyang S."/>
            <person name="Schwartz D.C."/>
            <person name="Tanaka T."/>
            <person name="Wu J."/>
            <person name="Zhou S."/>
            <person name="Childs K.L."/>
            <person name="Davidson R.M."/>
            <person name="Lin H."/>
            <person name="Quesada-Ocampo L."/>
            <person name="Vaillancourt B."/>
            <person name="Sakai H."/>
            <person name="Lee S.S."/>
            <person name="Kim J."/>
            <person name="Numa H."/>
            <person name="Itoh T."/>
            <person name="Buell C.R."/>
            <person name="Matsumoto T."/>
        </authorList>
    </citation>
    <scope>GENOME REANNOTATION</scope>
    <source>
        <strain>cv. Nipponbare</strain>
    </source>
</reference>
<reference key="5">
    <citation type="journal article" date="2005" name="PLoS Biol.">
        <title>The genomes of Oryza sativa: a history of duplications.</title>
        <authorList>
            <person name="Yu J."/>
            <person name="Wang J."/>
            <person name="Lin W."/>
            <person name="Li S."/>
            <person name="Li H."/>
            <person name="Zhou J."/>
            <person name="Ni P."/>
            <person name="Dong W."/>
            <person name="Hu S."/>
            <person name="Zeng C."/>
            <person name="Zhang J."/>
            <person name="Zhang Y."/>
            <person name="Li R."/>
            <person name="Xu Z."/>
            <person name="Li S."/>
            <person name="Li X."/>
            <person name="Zheng H."/>
            <person name="Cong L."/>
            <person name="Lin L."/>
            <person name="Yin J."/>
            <person name="Geng J."/>
            <person name="Li G."/>
            <person name="Shi J."/>
            <person name="Liu J."/>
            <person name="Lv H."/>
            <person name="Li J."/>
            <person name="Wang J."/>
            <person name="Deng Y."/>
            <person name="Ran L."/>
            <person name="Shi X."/>
            <person name="Wang X."/>
            <person name="Wu Q."/>
            <person name="Li C."/>
            <person name="Ren X."/>
            <person name="Wang J."/>
            <person name="Wang X."/>
            <person name="Li D."/>
            <person name="Liu D."/>
            <person name="Zhang X."/>
            <person name="Ji Z."/>
            <person name="Zhao W."/>
            <person name="Sun Y."/>
            <person name="Zhang Z."/>
            <person name="Bao J."/>
            <person name="Han Y."/>
            <person name="Dong L."/>
            <person name="Ji J."/>
            <person name="Chen P."/>
            <person name="Wu S."/>
            <person name="Liu J."/>
            <person name="Xiao Y."/>
            <person name="Bu D."/>
            <person name="Tan J."/>
            <person name="Yang L."/>
            <person name="Ye C."/>
            <person name="Zhang J."/>
            <person name="Xu J."/>
            <person name="Zhou Y."/>
            <person name="Yu Y."/>
            <person name="Zhang B."/>
            <person name="Zhuang S."/>
            <person name="Wei H."/>
            <person name="Liu B."/>
            <person name="Lei M."/>
            <person name="Yu H."/>
            <person name="Li Y."/>
            <person name="Xu H."/>
            <person name="Wei S."/>
            <person name="He X."/>
            <person name="Fang L."/>
            <person name="Zhang Z."/>
            <person name="Zhang Y."/>
            <person name="Huang X."/>
            <person name="Su Z."/>
            <person name="Tong W."/>
            <person name="Li J."/>
            <person name="Tong Z."/>
            <person name="Li S."/>
            <person name="Ye J."/>
            <person name="Wang L."/>
            <person name="Fang L."/>
            <person name="Lei T."/>
            <person name="Chen C.-S."/>
            <person name="Chen H.-C."/>
            <person name="Xu Z."/>
            <person name="Li H."/>
            <person name="Huang H."/>
            <person name="Zhang F."/>
            <person name="Xu H."/>
            <person name="Li N."/>
            <person name="Zhao C."/>
            <person name="Li S."/>
            <person name="Dong L."/>
            <person name="Huang Y."/>
            <person name="Li L."/>
            <person name="Xi Y."/>
            <person name="Qi Q."/>
            <person name="Li W."/>
            <person name="Zhang B."/>
            <person name="Hu W."/>
            <person name="Zhang Y."/>
            <person name="Tian X."/>
            <person name="Jiao Y."/>
            <person name="Liang X."/>
            <person name="Jin J."/>
            <person name="Gao L."/>
            <person name="Zheng W."/>
            <person name="Hao B."/>
            <person name="Liu S.-M."/>
            <person name="Wang W."/>
            <person name="Yuan L."/>
            <person name="Cao M."/>
            <person name="McDermott J."/>
            <person name="Samudrala R."/>
            <person name="Wang J."/>
            <person name="Wong G.K.-S."/>
            <person name="Yang H."/>
        </authorList>
    </citation>
    <scope>NUCLEOTIDE SEQUENCE [LARGE SCALE GENOMIC DNA]</scope>
    <source>
        <strain>cv. Nipponbare</strain>
    </source>
</reference>